<protein>
    <recommendedName>
        <fullName>Merlin</fullName>
    </recommendedName>
    <alternativeName>
        <fullName>Moesin-ezrin-radixin-like protein</fullName>
    </alternativeName>
    <alternativeName>
        <fullName>Neurofibromin-2</fullName>
    </alternativeName>
    <alternativeName>
        <fullName>Schwannomin</fullName>
    </alternativeName>
</protein>
<organism>
    <name type="scientific">Papio anubis</name>
    <name type="common">Olive baboon</name>
    <dbReference type="NCBI Taxonomy" id="9555"/>
    <lineage>
        <taxon>Eukaryota</taxon>
        <taxon>Metazoa</taxon>
        <taxon>Chordata</taxon>
        <taxon>Craniata</taxon>
        <taxon>Vertebrata</taxon>
        <taxon>Euteleostomi</taxon>
        <taxon>Mammalia</taxon>
        <taxon>Eutheria</taxon>
        <taxon>Euarchontoglires</taxon>
        <taxon>Primates</taxon>
        <taxon>Haplorrhini</taxon>
        <taxon>Catarrhini</taxon>
        <taxon>Cercopithecidae</taxon>
        <taxon>Cercopithecinae</taxon>
        <taxon>Papio</taxon>
    </lineage>
</organism>
<sequence length="595" mass="69663">MAGAIASRMSFSSLKRKQPKTFTVRIVTMDAEMEFNCEMKWKGKDLFDLVCRTLGLRETWFFGLQYTIKDTVAWLKMDKKVLDHDVSKEEPVTFHFLAKFYPENAEEELVQEITQHLFFLQVKKQILDEKIYCPPEASVLLASYAVQAKYGDYDPSVHKRGFLAQEELLPKRVINLYQMTPEMWEERITAWYAEHRGRARDEAEMEYLKIAQDLEMYGVNYFAIRNKKGTELLLGVDALGLHIYDPENRLTPKISFPWNEIRNISYSDKEFTIKPLDKKIDVFKFNSSKLRVNKLILQLCIGNHDLFMRRRKADSLEVQQMKAQAREEKARKQMERQRLAREKQMREEAERTRDELERRLLQMKEEATMANEALMRSEETADLLAEKAQITEEEAKLLAQKAAEAEQEMQRIKATAIRTEEEKRLMEQKVLEAEVLALKMAEESERRAKEADQLKQDLQEAREAERRAKQKLLEIATKPTYPPMNPIPAPLPPDIPSFSLIGDSLSFDFKDTDMKRLSMEIEKEKVEYMEKSKHLQEQLNELKTEIEALKLKERETALDILHNENSDRGGSSKHNTIKKLTLQSAKSRVAFFEEL</sequence>
<dbReference type="EMBL" id="AY123429">
    <property type="protein sequence ID" value="AAO23133.1"/>
    <property type="molecule type" value="Genomic_DNA"/>
</dbReference>
<dbReference type="EMBL" id="AY123428">
    <property type="protein sequence ID" value="AAO23133.1"/>
    <property type="status" value="JOINED"/>
    <property type="molecule type" value="Genomic_DNA"/>
</dbReference>
<dbReference type="RefSeq" id="XP_003905442.1">
    <property type="nucleotide sequence ID" value="XM_003905393.5"/>
</dbReference>
<dbReference type="SMR" id="P59750"/>
<dbReference type="STRING" id="9555.ENSPANP00000013097"/>
<dbReference type="Ensembl" id="ENSPANT00000019023.3">
    <property type="protein sequence ID" value="ENSPANP00000013097.1"/>
    <property type="gene ID" value="ENSPANG00000008277.3"/>
</dbReference>
<dbReference type="GeneID" id="101024601"/>
<dbReference type="KEGG" id="panu:101024601"/>
<dbReference type="CTD" id="4771"/>
<dbReference type="eggNOG" id="KOG3529">
    <property type="taxonomic scope" value="Eukaryota"/>
</dbReference>
<dbReference type="GeneTree" id="ENSGT01020000230354"/>
<dbReference type="HOGENOM" id="CLU_003623_6_1_1"/>
<dbReference type="OMA" id="PGMLANE"/>
<dbReference type="OrthoDB" id="10156at314294"/>
<dbReference type="Proteomes" id="UP000028761">
    <property type="component" value="Chromosome 16"/>
</dbReference>
<dbReference type="Bgee" id="ENSPANG00000008277">
    <property type="expression patterns" value="Expressed in postnatal subventricular zone and 68 other cell types or tissues"/>
</dbReference>
<dbReference type="ExpressionAtlas" id="P59750">
    <property type="expression patterns" value="baseline"/>
</dbReference>
<dbReference type="GO" id="GO:0005912">
    <property type="term" value="C:adherens junction"/>
    <property type="evidence" value="ECO:0007669"/>
    <property type="project" value="Ensembl"/>
</dbReference>
<dbReference type="GO" id="GO:0045177">
    <property type="term" value="C:apical part of cell"/>
    <property type="evidence" value="ECO:0007669"/>
    <property type="project" value="Ensembl"/>
</dbReference>
<dbReference type="GO" id="GO:0044297">
    <property type="term" value="C:cell body"/>
    <property type="evidence" value="ECO:0007669"/>
    <property type="project" value="Ensembl"/>
</dbReference>
<dbReference type="GO" id="GO:0032154">
    <property type="term" value="C:cleavage furrow"/>
    <property type="evidence" value="ECO:0007669"/>
    <property type="project" value="Ensembl"/>
</dbReference>
<dbReference type="GO" id="GO:0030864">
    <property type="term" value="C:cortical actin cytoskeleton"/>
    <property type="evidence" value="ECO:0007669"/>
    <property type="project" value="Ensembl"/>
</dbReference>
<dbReference type="GO" id="GO:0005829">
    <property type="term" value="C:cytosol"/>
    <property type="evidence" value="ECO:0007669"/>
    <property type="project" value="Ensembl"/>
</dbReference>
<dbReference type="GO" id="GO:0005769">
    <property type="term" value="C:early endosome"/>
    <property type="evidence" value="ECO:0007669"/>
    <property type="project" value="Ensembl"/>
</dbReference>
<dbReference type="GO" id="GO:0030175">
    <property type="term" value="C:filopodium"/>
    <property type="evidence" value="ECO:0007669"/>
    <property type="project" value="Ensembl"/>
</dbReference>
<dbReference type="GO" id="GO:0030027">
    <property type="term" value="C:lamellipodium"/>
    <property type="evidence" value="ECO:0007669"/>
    <property type="project" value="Ensembl"/>
</dbReference>
<dbReference type="GO" id="GO:0043005">
    <property type="term" value="C:neuron projection"/>
    <property type="evidence" value="ECO:0007669"/>
    <property type="project" value="Ensembl"/>
</dbReference>
<dbReference type="GO" id="GO:0005730">
    <property type="term" value="C:nucleolus"/>
    <property type="evidence" value="ECO:0007669"/>
    <property type="project" value="Ensembl"/>
</dbReference>
<dbReference type="GO" id="GO:0048471">
    <property type="term" value="C:perinuclear region of cytoplasm"/>
    <property type="evidence" value="ECO:0007669"/>
    <property type="project" value="Ensembl"/>
</dbReference>
<dbReference type="GO" id="GO:0001726">
    <property type="term" value="C:ruffle"/>
    <property type="evidence" value="ECO:0007669"/>
    <property type="project" value="Ensembl"/>
</dbReference>
<dbReference type="GO" id="GO:0003779">
    <property type="term" value="F:actin binding"/>
    <property type="evidence" value="ECO:0007669"/>
    <property type="project" value="InterPro"/>
</dbReference>
<dbReference type="GO" id="GO:0030036">
    <property type="term" value="P:actin cytoskeleton organization"/>
    <property type="evidence" value="ECO:0007669"/>
    <property type="project" value="Ensembl"/>
</dbReference>
<dbReference type="GO" id="GO:0045216">
    <property type="term" value="P:cell-cell junction organization"/>
    <property type="evidence" value="ECO:0007669"/>
    <property type="project" value="Ensembl"/>
</dbReference>
<dbReference type="GO" id="GO:0007398">
    <property type="term" value="P:ectoderm development"/>
    <property type="evidence" value="ECO:0007669"/>
    <property type="project" value="Ensembl"/>
</dbReference>
<dbReference type="GO" id="GO:0021766">
    <property type="term" value="P:hippocampus development"/>
    <property type="evidence" value="ECO:0007669"/>
    <property type="project" value="Ensembl"/>
</dbReference>
<dbReference type="GO" id="GO:0070306">
    <property type="term" value="P:lens fiber cell differentiation"/>
    <property type="evidence" value="ECO:0007669"/>
    <property type="project" value="Ensembl"/>
</dbReference>
<dbReference type="GO" id="GO:0000165">
    <property type="term" value="P:MAPK cascade"/>
    <property type="evidence" value="ECO:0007669"/>
    <property type="project" value="Ensembl"/>
</dbReference>
<dbReference type="GO" id="GO:0001707">
    <property type="term" value="P:mesoderm formation"/>
    <property type="evidence" value="ECO:0007669"/>
    <property type="project" value="Ensembl"/>
</dbReference>
<dbReference type="GO" id="GO:0022408">
    <property type="term" value="P:negative regulation of cell-cell adhesion"/>
    <property type="evidence" value="ECO:0007669"/>
    <property type="project" value="Ensembl"/>
</dbReference>
<dbReference type="GO" id="GO:0043409">
    <property type="term" value="P:negative regulation of MAPK cascade"/>
    <property type="evidence" value="ECO:0007669"/>
    <property type="project" value="Ensembl"/>
</dbReference>
<dbReference type="GO" id="GO:0033689">
    <property type="term" value="P:negative regulation of osteoblast proliferation"/>
    <property type="evidence" value="ECO:0007669"/>
    <property type="project" value="Ensembl"/>
</dbReference>
<dbReference type="GO" id="GO:0046426">
    <property type="term" value="P:negative regulation of receptor signaling pathway via JAK-STAT"/>
    <property type="evidence" value="ECO:0007669"/>
    <property type="project" value="Ensembl"/>
</dbReference>
<dbReference type="GO" id="GO:0010626">
    <property type="term" value="P:negative regulation of Schwann cell proliferation"/>
    <property type="evidence" value="ECO:0007669"/>
    <property type="project" value="Ensembl"/>
</dbReference>
<dbReference type="GO" id="GO:0042475">
    <property type="term" value="P:odontogenesis of dentin-containing tooth"/>
    <property type="evidence" value="ECO:0007669"/>
    <property type="project" value="Ensembl"/>
</dbReference>
<dbReference type="GO" id="GO:0033687">
    <property type="term" value="P:osteoblast proliferation"/>
    <property type="evidence" value="ECO:0007669"/>
    <property type="project" value="Ensembl"/>
</dbReference>
<dbReference type="GO" id="GO:0045597">
    <property type="term" value="P:positive regulation of cell differentiation"/>
    <property type="evidence" value="ECO:0007669"/>
    <property type="project" value="Ensembl"/>
</dbReference>
<dbReference type="GO" id="GO:0051496">
    <property type="term" value="P:positive regulation of stress fiber assembly"/>
    <property type="evidence" value="ECO:0007669"/>
    <property type="project" value="Ensembl"/>
</dbReference>
<dbReference type="GO" id="GO:0042981">
    <property type="term" value="P:regulation of apoptotic process"/>
    <property type="evidence" value="ECO:0000250"/>
    <property type="project" value="UniProtKB"/>
</dbReference>
<dbReference type="GO" id="GO:0051726">
    <property type="term" value="P:regulation of cell cycle"/>
    <property type="evidence" value="ECO:0000250"/>
    <property type="project" value="UniProtKB"/>
</dbReference>
<dbReference type="GO" id="GO:0035330">
    <property type="term" value="P:regulation of hippo signaling"/>
    <property type="evidence" value="ECO:0007669"/>
    <property type="project" value="Ensembl"/>
</dbReference>
<dbReference type="GO" id="GO:2000177">
    <property type="term" value="P:regulation of neural precursor cell proliferation"/>
    <property type="evidence" value="ECO:0007669"/>
    <property type="project" value="Ensembl"/>
</dbReference>
<dbReference type="GO" id="GO:1900180">
    <property type="term" value="P:regulation of protein localization to nucleus"/>
    <property type="evidence" value="ECO:0007669"/>
    <property type="project" value="Ensembl"/>
</dbReference>
<dbReference type="GO" id="GO:0031647">
    <property type="term" value="P:regulation of protein stability"/>
    <property type="evidence" value="ECO:0007669"/>
    <property type="project" value="Ensembl"/>
</dbReference>
<dbReference type="GO" id="GO:0072091">
    <property type="term" value="P:regulation of stem cell proliferation"/>
    <property type="evidence" value="ECO:0007669"/>
    <property type="project" value="Ensembl"/>
</dbReference>
<dbReference type="GO" id="GO:0014010">
    <property type="term" value="P:Schwann cell proliferation"/>
    <property type="evidence" value="ECO:0007669"/>
    <property type="project" value="Ensembl"/>
</dbReference>
<dbReference type="CDD" id="cd14473">
    <property type="entry name" value="FERM_B-lobe"/>
    <property type="match status" value="1"/>
</dbReference>
<dbReference type="CDD" id="cd13194">
    <property type="entry name" value="FERM_C_ERM"/>
    <property type="match status" value="1"/>
</dbReference>
<dbReference type="CDD" id="cd17186">
    <property type="entry name" value="FERM_F1_Merlin"/>
    <property type="match status" value="1"/>
</dbReference>
<dbReference type="FunFam" id="3.10.20.90:FF:000103">
    <property type="entry name" value="Merlin isoform 2"/>
    <property type="match status" value="1"/>
</dbReference>
<dbReference type="FunFam" id="2.30.29.30:FF:000003">
    <property type="entry name" value="Radixin isoform 1"/>
    <property type="match status" value="1"/>
</dbReference>
<dbReference type="FunFam" id="1.20.80.10:FF:000002">
    <property type="entry name" value="radixin isoform X1"/>
    <property type="match status" value="1"/>
</dbReference>
<dbReference type="FunFam" id="1.20.5.450:FF:000001">
    <property type="entry name" value="radixin isoform X2"/>
    <property type="match status" value="1"/>
</dbReference>
<dbReference type="Gene3D" id="1.20.5.450">
    <property type="match status" value="1"/>
</dbReference>
<dbReference type="Gene3D" id="1.20.80.10">
    <property type="match status" value="1"/>
</dbReference>
<dbReference type="Gene3D" id="6.10.360.10">
    <property type="match status" value="1"/>
</dbReference>
<dbReference type="Gene3D" id="3.10.20.90">
    <property type="entry name" value="Phosphatidylinositol 3-kinase Catalytic Subunit, Chain A, domain 1"/>
    <property type="match status" value="1"/>
</dbReference>
<dbReference type="Gene3D" id="2.30.29.30">
    <property type="entry name" value="Pleckstrin-homology domain (PH domain)/Phosphotyrosine-binding domain (PTB)"/>
    <property type="match status" value="1"/>
</dbReference>
<dbReference type="InterPro" id="IPR019749">
    <property type="entry name" value="Band_41_domain"/>
</dbReference>
<dbReference type="InterPro" id="IPR011174">
    <property type="entry name" value="ERM"/>
</dbReference>
<dbReference type="InterPro" id="IPR011259">
    <property type="entry name" value="ERM_C_dom"/>
</dbReference>
<dbReference type="InterPro" id="IPR041789">
    <property type="entry name" value="ERM_FERM_C"/>
</dbReference>
<dbReference type="InterPro" id="IPR046810">
    <property type="entry name" value="ERM_helical"/>
</dbReference>
<dbReference type="InterPro" id="IPR000798">
    <property type="entry name" value="Ez/rad/moesin-like"/>
</dbReference>
<dbReference type="InterPro" id="IPR014352">
    <property type="entry name" value="FERM/acyl-CoA-bd_prot_sf"/>
</dbReference>
<dbReference type="InterPro" id="IPR035963">
    <property type="entry name" value="FERM_2"/>
</dbReference>
<dbReference type="InterPro" id="IPR019748">
    <property type="entry name" value="FERM_central"/>
</dbReference>
<dbReference type="InterPro" id="IPR019747">
    <property type="entry name" value="FERM_CS"/>
</dbReference>
<dbReference type="InterPro" id="IPR000299">
    <property type="entry name" value="FERM_domain"/>
</dbReference>
<dbReference type="InterPro" id="IPR018979">
    <property type="entry name" value="FERM_N"/>
</dbReference>
<dbReference type="InterPro" id="IPR018980">
    <property type="entry name" value="FERM_PH-like_C"/>
</dbReference>
<dbReference type="InterPro" id="IPR008954">
    <property type="entry name" value="Moesin_tail_sf"/>
</dbReference>
<dbReference type="InterPro" id="IPR011993">
    <property type="entry name" value="PH-like_dom_sf"/>
</dbReference>
<dbReference type="InterPro" id="IPR029071">
    <property type="entry name" value="Ubiquitin-like_domsf"/>
</dbReference>
<dbReference type="PANTHER" id="PTHR23281">
    <property type="entry name" value="MERLIN/MOESIN/EZRIN/RADIXIN"/>
    <property type="match status" value="1"/>
</dbReference>
<dbReference type="Pfam" id="PF00769">
    <property type="entry name" value="ERM_C"/>
    <property type="match status" value="1"/>
</dbReference>
<dbReference type="Pfam" id="PF20492">
    <property type="entry name" value="ERM_helical"/>
    <property type="match status" value="1"/>
</dbReference>
<dbReference type="Pfam" id="PF09380">
    <property type="entry name" value="FERM_C"/>
    <property type="match status" value="1"/>
</dbReference>
<dbReference type="Pfam" id="PF00373">
    <property type="entry name" value="FERM_M"/>
    <property type="match status" value="1"/>
</dbReference>
<dbReference type="Pfam" id="PF09379">
    <property type="entry name" value="FERM_N"/>
    <property type="match status" value="1"/>
</dbReference>
<dbReference type="PIRSF" id="PIRSF002305">
    <property type="entry name" value="ERM"/>
    <property type="match status" value="1"/>
</dbReference>
<dbReference type="PRINTS" id="PR00935">
    <property type="entry name" value="BAND41"/>
</dbReference>
<dbReference type="PRINTS" id="PR00661">
    <property type="entry name" value="ERMFAMILY"/>
</dbReference>
<dbReference type="SMART" id="SM00295">
    <property type="entry name" value="B41"/>
    <property type="match status" value="1"/>
</dbReference>
<dbReference type="SMART" id="SM01196">
    <property type="entry name" value="FERM_C"/>
    <property type="match status" value="1"/>
</dbReference>
<dbReference type="SUPFAM" id="SSF48678">
    <property type="entry name" value="Moesin tail domain"/>
    <property type="match status" value="1"/>
</dbReference>
<dbReference type="SUPFAM" id="SSF50729">
    <property type="entry name" value="PH domain-like"/>
    <property type="match status" value="1"/>
</dbReference>
<dbReference type="SUPFAM" id="SSF47031">
    <property type="entry name" value="Second domain of FERM"/>
    <property type="match status" value="1"/>
</dbReference>
<dbReference type="SUPFAM" id="SSF54236">
    <property type="entry name" value="Ubiquitin-like"/>
    <property type="match status" value="1"/>
</dbReference>
<dbReference type="PROSITE" id="PS00660">
    <property type="entry name" value="FERM_1"/>
    <property type="match status" value="1"/>
</dbReference>
<dbReference type="PROSITE" id="PS00661">
    <property type="entry name" value="FERM_2"/>
    <property type="match status" value="1"/>
</dbReference>
<dbReference type="PROSITE" id="PS50057">
    <property type="entry name" value="FERM_3"/>
    <property type="match status" value="1"/>
</dbReference>
<proteinExistence type="inferred from homology"/>
<gene>
    <name type="primary">NF2</name>
</gene>
<feature type="chain" id="PRO_0000219414" description="Merlin">
    <location>
        <begin position="1"/>
        <end position="595"/>
    </location>
</feature>
<feature type="domain" description="FERM" evidence="3">
    <location>
        <begin position="22"/>
        <end position="311"/>
    </location>
</feature>
<feature type="modified residue" description="Phosphoserine" evidence="2">
    <location>
        <position position="13"/>
    </location>
</feature>
<feature type="modified residue" description="Phosphoserine; by PAK" evidence="2">
    <location>
        <position position="518"/>
    </location>
</feature>
<accession>P59750</accession>
<accession>Q866X1</accession>
<name>MERL_PAPAN</name>
<comment type="function">
    <text evidence="2">Probable regulator of the Hippo/SWH (Sav/Wts/Hpo) signaling pathway, a signaling pathway that plays a pivotal role in tumor suppression by restricting proliferation and promoting apoptosis. Along with WWC1 can synergistically induce the phosphorylation of LATS1 and LATS2 and can probably function in the regulation of the Hippo/SWH (Sav/Wts/Hpo) signaling pathway. May act as a membrane stabilizing protein. May inhibit PI3 kinase by binding to AGAP2 and impairing its stimulating activity. Suppresses cell proliferation and tumorigenesis by inhibiting the CUL4A-RBX1-DDB1-VprBP/DCAF1 E3 ubiquitin-protein ligase complex (By similarity).</text>
</comment>
<comment type="subunit">
    <text evidence="2">Interacts with NHERF1, HGS and AGAP2. Interacts with SGSM3. Interacts (via FERM domain) with MPP1 (By similarity). Interacts with LAYN and WWC1. Interacts with the CUL4A-RBX1-DDB1-VprBP/DCAF1 E3 ubiquitin-protein ligase complex. The unphosphorylated form interacts (via FERM domain) with VPRBP/DCAF1. Interacts (via FERM domain) with NOP53; the interaction is direct. Interacts with SCHIP1; the interaction is direct.</text>
</comment>
<comment type="subcellular location">
    <subcellularLocation>
        <location evidence="1">Cell membrane</location>
        <topology evidence="1">Peripheral membrane protein</topology>
        <orientation evidence="1">Cytoplasmic side</orientation>
    </subcellularLocation>
    <subcellularLocation>
        <location evidence="1">Cell projection</location>
    </subcellularLocation>
    <subcellularLocation>
        <location evidence="1">Cytoplasm</location>
        <location evidence="1">Cytoskeleton</location>
    </subcellularLocation>
    <subcellularLocation>
        <location evidence="1">Nucleus</location>
    </subcellularLocation>
    <text evidence="1">Colocalizes with MPP1 in non-myelin-forming Schwann cells. Binds with DCAF1 in the nucleus. The intramolecular association of the FERM domain with the C-terminal tail promotes nuclear accumulation. The unphosphorylated form accumulates predominantly in the nucleus while the phosphorylated form is largely confined to the non-nuclear fractions (By similarity).</text>
</comment>
<comment type="PTM">
    <text evidence="1">Phosphorylation of Ser-518 inhibits nuclear localization by disrupting the intramolecular association of the FERM domain with the C-terminal tail.</text>
</comment>
<comment type="PTM">
    <text evidence="1">Ubiquitinated by the CUL4A-RBX1-DDB1-DCAF1/VprBP E3 ubiquitin-protein ligase complex for ubiquitination and subsequent proteasome-dependent degradation.</text>
</comment>
<comment type="PTM">
    <text evidence="2">Phosphorylation of Ser-518 inhibits nuclear localization by disrupting the intramolecular association of the FERM domain with the C-terminal tail. The dephosphorylation of Ser-518 favors the interaction with NOP53.</text>
</comment>
<evidence type="ECO:0000250" key="1"/>
<evidence type="ECO:0000250" key="2">
    <source>
        <dbReference type="UniProtKB" id="P35240"/>
    </source>
</evidence>
<evidence type="ECO:0000255" key="3">
    <source>
        <dbReference type="PROSITE-ProRule" id="PRU00084"/>
    </source>
</evidence>
<reference key="1">
    <citation type="journal article" date="2003" name="Mamm. Genome">
        <title>Strong conservation of the human NF2 locus based on sequence comparison in five species.</title>
        <authorList>
            <person name="Hansson C.M."/>
            <person name="Ali H."/>
            <person name="Bruder C.E."/>
            <person name="Fransson I."/>
            <person name="Kluge S."/>
            <person name="Andersson B."/>
            <person name="Roe B.A."/>
            <person name="Menzel U."/>
            <person name="Dumanski J.P."/>
        </authorList>
    </citation>
    <scope>NUCLEOTIDE SEQUENCE [GENOMIC DNA]</scope>
</reference>
<keyword id="KW-1003">Cell membrane</keyword>
<keyword id="KW-0966">Cell projection</keyword>
<keyword id="KW-0963">Cytoplasm</keyword>
<keyword id="KW-0206">Cytoskeleton</keyword>
<keyword id="KW-0472">Membrane</keyword>
<keyword id="KW-0539">Nucleus</keyword>
<keyword id="KW-0597">Phosphoprotein</keyword>
<keyword id="KW-1185">Reference proteome</keyword>
<keyword id="KW-0043">Tumor suppressor</keyword>
<keyword id="KW-0832">Ubl conjugation</keyword>